<accession>Q8EKT4</accession>
<reference key="1">
    <citation type="journal article" date="2002" name="Nat. Biotechnol.">
        <title>Genome sequence of the dissimilatory metal ion-reducing bacterium Shewanella oneidensis.</title>
        <authorList>
            <person name="Heidelberg J.F."/>
            <person name="Paulsen I.T."/>
            <person name="Nelson K.E."/>
            <person name="Gaidos E.J."/>
            <person name="Nelson W.C."/>
            <person name="Read T.D."/>
            <person name="Eisen J.A."/>
            <person name="Seshadri R."/>
            <person name="Ward N.L."/>
            <person name="Methe B.A."/>
            <person name="Clayton R.A."/>
            <person name="Meyer T."/>
            <person name="Tsapin A."/>
            <person name="Scott J."/>
            <person name="Beanan M.J."/>
            <person name="Brinkac L.M."/>
            <person name="Daugherty S.C."/>
            <person name="DeBoy R.T."/>
            <person name="Dodson R.J."/>
            <person name="Durkin A.S."/>
            <person name="Haft D.H."/>
            <person name="Kolonay J.F."/>
            <person name="Madupu R."/>
            <person name="Peterson J.D."/>
            <person name="Umayam L.A."/>
            <person name="White O."/>
            <person name="Wolf A.M."/>
            <person name="Vamathevan J.J."/>
            <person name="Weidman J.F."/>
            <person name="Impraim M."/>
            <person name="Lee K."/>
            <person name="Berry K.J."/>
            <person name="Lee C."/>
            <person name="Mueller J."/>
            <person name="Khouri H.M."/>
            <person name="Gill J."/>
            <person name="Utterback T.R."/>
            <person name="McDonald L.A."/>
            <person name="Feldblyum T.V."/>
            <person name="Smith H.O."/>
            <person name="Venter J.C."/>
            <person name="Nealson K.H."/>
            <person name="Fraser C.M."/>
        </authorList>
    </citation>
    <scope>NUCLEOTIDE SEQUENCE [LARGE SCALE GENOMIC DNA]</scope>
    <source>
        <strain>ATCC 700550 / JCM 31522 / CIP 106686 / LMG 19005 / NCIMB 14063 / MR-1</strain>
    </source>
</reference>
<gene>
    <name evidence="1" type="primary">rnpA</name>
    <name type="ordered locus">SO_0006</name>
</gene>
<evidence type="ECO:0000255" key="1">
    <source>
        <dbReference type="HAMAP-Rule" id="MF_00227"/>
    </source>
</evidence>
<sequence length="118" mass="13827">MTSYTFTRELRLLTPAQFKSVFSNPIKASSAEITLLAIPNSEQHPRLGLTVAKRYVKRANQRNRIKRVIRDSFRLNQHNIPHLDIVVLVRNGVMEMENAELNKLIEKLWRKLSRRYNG</sequence>
<comment type="function">
    <text evidence="1">RNaseP catalyzes the removal of the 5'-leader sequence from pre-tRNA to produce the mature 5'-terminus. It can also cleave other RNA substrates such as 4.5S RNA. The protein component plays an auxiliary but essential role in vivo by binding to the 5'-leader sequence and broadening the substrate specificity of the ribozyme.</text>
</comment>
<comment type="catalytic activity">
    <reaction evidence="1">
        <text>Endonucleolytic cleavage of RNA, removing 5'-extranucleotides from tRNA precursor.</text>
        <dbReference type="EC" id="3.1.26.5"/>
    </reaction>
</comment>
<comment type="subunit">
    <text evidence="1">Consists of a catalytic RNA component (M1 or rnpB) and a protein subunit.</text>
</comment>
<comment type="similarity">
    <text evidence="1">Belongs to the RnpA family.</text>
</comment>
<organism>
    <name type="scientific">Shewanella oneidensis (strain ATCC 700550 / JCM 31522 / CIP 106686 / LMG 19005 / NCIMB 14063 / MR-1)</name>
    <dbReference type="NCBI Taxonomy" id="211586"/>
    <lineage>
        <taxon>Bacteria</taxon>
        <taxon>Pseudomonadati</taxon>
        <taxon>Pseudomonadota</taxon>
        <taxon>Gammaproteobacteria</taxon>
        <taxon>Alteromonadales</taxon>
        <taxon>Shewanellaceae</taxon>
        <taxon>Shewanella</taxon>
    </lineage>
</organism>
<proteinExistence type="inferred from homology"/>
<protein>
    <recommendedName>
        <fullName evidence="1">Ribonuclease P protein component</fullName>
        <shortName evidence="1">RNase P protein</shortName>
        <shortName evidence="1">RNaseP protein</shortName>
        <ecNumber evidence="1">3.1.26.5</ecNumber>
    </recommendedName>
    <alternativeName>
        <fullName evidence="1">Protein C5</fullName>
    </alternativeName>
</protein>
<feature type="chain" id="PRO_0000198522" description="Ribonuclease P protein component">
    <location>
        <begin position="1"/>
        <end position="118"/>
    </location>
</feature>
<name>RNPA_SHEON</name>
<keyword id="KW-0255">Endonuclease</keyword>
<keyword id="KW-0378">Hydrolase</keyword>
<keyword id="KW-0540">Nuclease</keyword>
<keyword id="KW-1185">Reference proteome</keyword>
<keyword id="KW-0694">RNA-binding</keyword>
<keyword id="KW-0819">tRNA processing</keyword>
<dbReference type="EC" id="3.1.26.5" evidence="1"/>
<dbReference type="EMBL" id="AE014299">
    <property type="protein sequence ID" value="AAN53093.1"/>
    <property type="molecule type" value="Genomic_DNA"/>
</dbReference>
<dbReference type="RefSeq" id="NP_715648.1">
    <property type="nucleotide sequence ID" value="NC_004347.2"/>
</dbReference>
<dbReference type="RefSeq" id="WP_011070422.1">
    <property type="nucleotide sequence ID" value="NZ_CP053946.1"/>
</dbReference>
<dbReference type="SMR" id="Q8EKT4"/>
<dbReference type="STRING" id="211586.SO_0006"/>
<dbReference type="PaxDb" id="211586-SO_0006"/>
<dbReference type="GeneID" id="75186592"/>
<dbReference type="KEGG" id="son:SO_0006"/>
<dbReference type="PATRIC" id="fig|211586.12.peg.6"/>
<dbReference type="eggNOG" id="COG0594">
    <property type="taxonomic scope" value="Bacteria"/>
</dbReference>
<dbReference type="HOGENOM" id="CLU_117179_11_0_6"/>
<dbReference type="OrthoDB" id="9796422at2"/>
<dbReference type="PhylomeDB" id="Q8EKT4"/>
<dbReference type="BioCyc" id="SONE211586:G1GMP-6-MONOMER"/>
<dbReference type="Proteomes" id="UP000008186">
    <property type="component" value="Chromosome"/>
</dbReference>
<dbReference type="GO" id="GO:0030677">
    <property type="term" value="C:ribonuclease P complex"/>
    <property type="evidence" value="ECO:0000318"/>
    <property type="project" value="GO_Central"/>
</dbReference>
<dbReference type="GO" id="GO:0042781">
    <property type="term" value="F:3'-tRNA processing endoribonuclease activity"/>
    <property type="evidence" value="ECO:0000318"/>
    <property type="project" value="GO_Central"/>
</dbReference>
<dbReference type="GO" id="GO:0004526">
    <property type="term" value="F:ribonuclease P activity"/>
    <property type="evidence" value="ECO:0000318"/>
    <property type="project" value="GO_Central"/>
</dbReference>
<dbReference type="GO" id="GO:0000049">
    <property type="term" value="F:tRNA binding"/>
    <property type="evidence" value="ECO:0007669"/>
    <property type="project" value="UniProtKB-UniRule"/>
</dbReference>
<dbReference type="GO" id="GO:0042780">
    <property type="term" value="P:tRNA 3'-end processing"/>
    <property type="evidence" value="ECO:0000318"/>
    <property type="project" value="GO_Central"/>
</dbReference>
<dbReference type="GO" id="GO:0001682">
    <property type="term" value="P:tRNA 5'-leader removal"/>
    <property type="evidence" value="ECO:0007669"/>
    <property type="project" value="UniProtKB-UniRule"/>
</dbReference>
<dbReference type="FunFam" id="3.30.230.10:FF:000016">
    <property type="entry name" value="Ribonuclease P protein component"/>
    <property type="match status" value="1"/>
</dbReference>
<dbReference type="Gene3D" id="3.30.230.10">
    <property type="match status" value="1"/>
</dbReference>
<dbReference type="HAMAP" id="MF_00227">
    <property type="entry name" value="RNase_P"/>
    <property type="match status" value="1"/>
</dbReference>
<dbReference type="InterPro" id="IPR020568">
    <property type="entry name" value="Ribosomal_Su5_D2-typ_SF"/>
</dbReference>
<dbReference type="InterPro" id="IPR014721">
    <property type="entry name" value="Ribsml_uS5_D2-typ_fold_subgr"/>
</dbReference>
<dbReference type="InterPro" id="IPR000100">
    <property type="entry name" value="RNase_P"/>
</dbReference>
<dbReference type="InterPro" id="IPR020539">
    <property type="entry name" value="RNase_P_CS"/>
</dbReference>
<dbReference type="NCBIfam" id="TIGR00188">
    <property type="entry name" value="rnpA"/>
    <property type="match status" value="1"/>
</dbReference>
<dbReference type="PANTHER" id="PTHR33992">
    <property type="entry name" value="RIBONUCLEASE P PROTEIN COMPONENT"/>
    <property type="match status" value="1"/>
</dbReference>
<dbReference type="PANTHER" id="PTHR33992:SF1">
    <property type="entry name" value="RIBONUCLEASE P PROTEIN COMPONENT"/>
    <property type="match status" value="1"/>
</dbReference>
<dbReference type="Pfam" id="PF00825">
    <property type="entry name" value="Ribonuclease_P"/>
    <property type="match status" value="1"/>
</dbReference>
<dbReference type="SUPFAM" id="SSF54211">
    <property type="entry name" value="Ribosomal protein S5 domain 2-like"/>
    <property type="match status" value="1"/>
</dbReference>
<dbReference type="PROSITE" id="PS00648">
    <property type="entry name" value="RIBONUCLEASE_P"/>
    <property type="match status" value="1"/>
</dbReference>